<organism>
    <name type="scientific">Corynebacterium jeikeium (strain K411)</name>
    <dbReference type="NCBI Taxonomy" id="306537"/>
    <lineage>
        <taxon>Bacteria</taxon>
        <taxon>Bacillati</taxon>
        <taxon>Actinomycetota</taxon>
        <taxon>Actinomycetes</taxon>
        <taxon>Mycobacteriales</taxon>
        <taxon>Corynebacteriaceae</taxon>
        <taxon>Corynebacterium</taxon>
    </lineage>
</organism>
<proteinExistence type="inferred from homology"/>
<accession>Q4JWA4</accession>
<evidence type="ECO:0000255" key="1">
    <source>
        <dbReference type="HAMAP-Rule" id="MF_01008"/>
    </source>
</evidence>
<evidence type="ECO:0000255" key="2">
    <source>
        <dbReference type="PROSITE-ProRule" id="PRU01076"/>
    </source>
</evidence>
<feature type="chain" id="PRO_0000230082" description="Transcriptional regulator MraZ">
    <location>
        <begin position="1"/>
        <end position="143"/>
    </location>
</feature>
<feature type="domain" description="SpoVT-AbrB 1" evidence="2">
    <location>
        <begin position="5"/>
        <end position="47"/>
    </location>
</feature>
<feature type="domain" description="SpoVT-AbrB 2" evidence="2">
    <location>
        <begin position="76"/>
        <end position="119"/>
    </location>
</feature>
<comment type="subunit">
    <text evidence="1">Forms oligomers.</text>
</comment>
<comment type="subcellular location">
    <subcellularLocation>
        <location evidence="1">Cytoplasm</location>
        <location evidence="1">Nucleoid</location>
    </subcellularLocation>
</comment>
<comment type="similarity">
    <text evidence="1">Belongs to the MraZ family.</text>
</comment>
<sequence>MFFGTFTPKLDDKGRLTLPAKFREELGEGLMVVKGQDRSLAVYPKAEFLVRAKKAAEASRTNPKARAFVRNLAASADEQNLDSQGRISVSVMHRDYAGLTKECVVIGNVDFIEIWDAESWADYSAEHEEDFSDGDDEVLATFL</sequence>
<protein>
    <recommendedName>
        <fullName>Transcriptional regulator MraZ</fullName>
    </recommendedName>
</protein>
<keyword id="KW-0963">Cytoplasm</keyword>
<keyword id="KW-0238">DNA-binding</keyword>
<keyword id="KW-1185">Reference proteome</keyword>
<keyword id="KW-0677">Repeat</keyword>
<keyword id="KW-0804">Transcription</keyword>
<keyword id="KW-0805">Transcription regulation</keyword>
<reference key="1">
    <citation type="journal article" date="2005" name="J. Bacteriol.">
        <title>Complete genome sequence and analysis of the multiresistant nosocomial pathogen Corynebacterium jeikeium K411, a lipid-requiring bacterium of the human skin flora.</title>
        <authorList>
            <person name="Tauch A."/>
            <person name="Kaiser O."/>
            <person name="Hain T."/>
            <person name="Goesmann A."/>
            <person name="Weisshaar B."/>
            <person name="Albersmeier A."/>
            <person name="Bekel T."/>
            <person name="Bischoff N."/>
            <person name="Brune I."/>
            <person name="Chakraborty T."/>
            <person name="Kalinowski J."/>
            <person name="Meyer F."/>
            <person name="Rupp O."/>
            <person name="Schneiker S."/>
            <person name="Viehoever P."/>
            <person name="Puehler A."/>
        </authorList>
    </citation>
    <scope>NUCLEOTIDE SEQUENCE [LARGE SCALE GENOMIC DNA]</scope>
    <source>
        <strain>K411</strain>
    </source>
</reference>
<name>MRAZ_CORJK</name>
<dbReference type="EMBL" id="CR931997">
    <property type="protein sequence ID" value="CAI36903.1"/>
    <property type="molecule type" value="Genomic_DNA"/>
</dbReference>
<dbReference type="RefSeq" id="WP_011273354.1">
    <property type="nucleotide sequence ID" value="NC_007164.1"/>
</dbReference>
<dbReference type="SMR" id="Q4JWA4"/>
<dbReference type="STRING" id="306537.jk0741"/>
<dbReference type="KEGG" id="cjk:jk0741"/>
<dbReference type="PATRIC" id="fig|306537.10.peg.749"/>
<dbReference type="eggNOG" id="COG2001">
    <property type="taxonomic scope" value="Bacteria"/>
</dbReference>
<dbReference type="HOGENOM" id="CLU_107907_0_5_11"/>
<dbReference type="OrthoDB" id="9807753at2"/>
<dbReference type="Proteomes" id="UP000000545">
    <property type="component" value="Chromosome"/>
</dbReference>
<dbReference type="GO" id="GO:0005737">
    <property type="term" value="C:cytoplasm"/>
    <property type="evidence" value="ECO:0007669"/>
    <property type="project" value="UniProtKB-UniRule"/>
</dbReference>
<dbReference type="GO" id="GO:0009295">
    <property type="term" value="C:nucleoid"/>
    <property type="evidence" value="ECO:0007669"/>
    <property type="project" value="UniProtKB-SubCell"/>
</dbReference>
<dbReference type="GO" id="GO:0003700">
    <property type="term" value="F:DNA-binding transcription factor activity"/>
    <property type="evidence" value="ECO:0007669"/>
    <property type="project" value="UniProtKB-UniRule"/>
</dbReference>
<dbReference type="GO" id="GO:0000976">
    <property type="term" value="F:transcription cis-regulatory region binding"/>
    <property type="evidence" value="ECO:0007669"/>
    <property type="project" value="TreeGrafter"/>
</dbReference>
<dbReference type="GO" id="GO:2000143">
    <property type="term" value="P:negative regulation of DNA-templated transcription initiation"/>
    <property type="evidence" value="ECO:0007669"/>
    <property type="project" value="TreeGrafter"/>
</dbReference>
<dbReference type="CDD" id="cd16321">
    <property type="entry name" value="MraZ_C"/>
    <property type="match status" value="1"/>
</dbReference>
<dbReference type="CDD" id="cd16320">
    <property type="entry name" value="MraZ_N"/>
    <property type="match status" value="1"/>
</dbReference>
<dbReference type="Gene3D" id="3.40.1550.20">
    <property type="entry name" value="Transcriptional regulator MraZ domain"/>
    <property type="match status" value="1"/>
</dbReference>
<dbReference type="HAMAP" id="MF_01008">
    <property type="entry name" value="MraZ"/>
    <property type="match status" value="1"/>
</dbReference>
<dbReference type="InterPro" id="IPR003444">
    <property type="entry name" value="MraZ"/>
</dbReference>
<dbReference type="InterPro" id="IPR035644">
    <property type="entry name" value="MraZ_C"/>
</dbReference>
<dbReference type="InterPro" id="IPR020603">
    <property type="entry name" value="MraZ_dom"/>
</dbReference>
<dbReference type="InterPro" id="IPR035642">
    <property type="entry name" value="MraZ_N"/>
</dbReference>
<dbReference type="InterPro" id="IPR038619">
    <property type="entry name" value="MraZ_sf"/>
</dbReference>
<dbReference type="InterPro" id="IPR007159">
    <property type="entry name" value="SpoVT-AbrB_dom"/>
</dbReference>
<dbReference type="InterPro" id="IPR037914">
    <property type="entry name" value="SpoVT-AbrB_sf"/>
</dbReference>
<dbReference type="NCBIfam" id="TIGR00242">
    <property type="entry name" value="division/cell wall cluster transcriptional repressor MraZ"/>
    <property type="match status" value="1"/>
</dbReference>
<dbReference type="PANTHER" id="PTHR34701">
    <property type="entry name" value="TRANSCRIPTIONAL REGULATOR MRAZ"/>
    <property type="match status" value="1"/>
</dbReference>
<dbReference type="PANTHER" id="PTHR34701:SF1">
    <property type="entry name" value="TRANSCRIPTIONAL REGULATOR MRAZ"/>
    <property type="match status" value="1"/>
</dbReference>
<dbReference type="Pfam" id="PF02381">
    <property type="entry name" value="MraZ"/>
    <property type="match status" value="2"/>
</dbReference>
<dbReference type="SUPFAM" id="SSF89447">
    <property type="entry name" value="AbrB/MazE/MraZ-like"/>
    <property type="match status" value="1"/>
</dbReference>
<dbReference type="PROSITE" id="PS51740">
    <property type="entry name" value="SPOVT_ABRB"/>
    <property type="match status" value="2"/>
</dbReference>
<gene>
    <name evidence="1" type="primary">mraZ</name>
    <name type="ordered locus">jk0741</name>
</gene>